<name>NUDL_ECO55</name>
<dbReference type="EC" id="3.6.1.-" evidence="1"/>
<dbReference type="EMBL" id="CU928145">
    <property type="protein sequence ID" value="CAU97844.1"/>
    <property type="molecule type" value="Genomic_DNA"/>
</dbReference>
<dbReference type="RefSeq" id="WP_000456725.1">
    <property type="nucleotide sequence ID" value="NC_011748.1"/>
</dbReference>
<dbReference type="SMR" id="B7L6U1"/>
<dbReference type="KEGG" id="eck:EC55989_1986"/>
<dbReference type="HOGENOM" id="CLU_040940_5_2_6"/>
<dbReference type="Proteomes" id="UP000000746">
    <property type="component" value="Chromosome"/>
</dbReference>
<dbReference type="GO" id="GO:0010945">
    <property type="term" value="F:coenzyme A diphosphatase activity"/>
    <property type="evidence" value="ECO:0007669"/>
    <property type="project" value="InterPro"/>
</dbReference>
<dbReference type="GO" id="GO:0000287">
    <property type="term" value="F:magnesium ion binding"/>
    <property type="evidence" value="ECO:0007669"/>
    <property type="project" value="UniProtKB-UniRule"/>
</dbReference>
<dbReference type="GO" id="GO:0030145">
    <property type="term" value="F:manganese ion binding"/>
    <property type="evidence" value="ECO:0007669"/>
    <property type="project" value="UniProtKB-UniRule"/>
</dbReference>
<dbReference type="GO" id="GO:0009132">
    <property type="term" value="P:nucleoside diphosphate metabolic process"/>
    <property type="evidence" value="ECO:0007669"/>
    <property type="project" value="InterPro"/>
</dbReference>
<dbReference type="CDD" id="cd03426">
    <property type="entry name" value="NUDIX_CoAse_Nudt7"/>
    <property type="match status" value="1"/>
</dbReference>
<dbReference type="FunFam" id="3.90.79.10:FF:000013">
    <property type="entry name" value="Uncharacterized Nudix hydrolase NudL"/>
    <property type="match status" value="1"/>
</dbReference>
<dbReference type="Gene3D" id="3.90.79.10">
    <property type="entry name" value="Nucleoside Triphosphate Pyrophosphohydrolase"/>
    <property type="match status" value="1"/>
</dbReference>
<dbReference type="HAMAP" id="MF_01592">
    <property type="entry name" value="Nudix_NudL"/>
    <property type="match status" value="1"/>
</dbReference>
<dbReference type="InterPro" id="IPR045121">
    <property type="entry name" value="CoAse"/>
</dbReference>
<dbReference type="InterPro" id="IPR015797">
    <property type="entry name" value="NUDIX_hydrolase-like_dom_sf"/>
</dbReference>
<dbReference type="InterPro" id="IPR000086">
    <property type="entry name" value="NUDIX_hydrolase_dom"/>
</dbReference>
<dbReference type="InterPro" id="IPR000059">
    <property type="entry name" value="NUDIX_hydrolase_NudL_CS"/>
</dbReference>
<dbReference type="InterPro" id="IPR023735">
    <property type="entry name" value="Nudix_NudL"/>
</dbReference>
<dbReference type="NCBIfam" id="NF007980">
    <property type="entry name" value="PRK10707.1"/>
    <property type="match status" value="1"/>
</dbReference>
<dbReference type="PANTHER" id="PTHR12992:SF11">
    <property type="entry name" value="MITOCHONDRIAL COENZYME A DIPHOSPHATASE NUDT8"/>
    <property type="match status" value="1"/>
</dbReference>
<dbReference type="PANTHER" id="PTHR12992">
    <property type="entry name" value="NUDIX HYDROLASE"/>
    <property type="match status" value="1"/>
</dbReference>
<dbReference type="Pfam" id="PF00293">
    <property type="entry name" value="NUDIX"/>
    <property type="match status" value="1"/>
</dbReference>
<dbReference type="SUPFAM" id="SSF55811">
    <property type="entry name" value="Nudix"/>
    <property type="match status" value="1"/>
</dbReference>
<dbReference type="PROSITE" id="PS51462">
    <property type="entry name" value="NUDIX"/>
    <property type="match status" value="1"/>
</dbReference>
<dbReference type="PROSITE" id="PS01293">
    <property type="entry name" value="NUDIX_COA"/>
    <property type="match status" value="1"/>
</dbReference>
<protein>
    <recommendedName>
        <fullName evidence="1">Uncharacterized Nudix hydrolase NudL</fullName>
        <ecNumber evidence="1">3.6.1.-</ecNumber>
    </recommendedName>
</protein>
<proteinExistence type="inferred from homology"/>
<comment type="function">
    <text evidence="1">Probably mediates the hydrolysis of some nucleoside diphosphate derivatives.</text>
</comment>
<comment type="cofactor">
    <cofactor evidence="1">
        <name>Mn(2+)</name>
        <dbReference type="ChEBI" id="CHEBI:29035"/>
    </cofactor>
    <cofactor evidence="1">
        <name>Mg(2+)</name>
        <dbReference type="ChEBI" id="CHEBI:18420"/>
    </cofactor>
</comment>
<comment type="similarity">
    <text evidence="1">Belongs to the Nudix hydrolase family. PCD1 subfamily.</text>
</comment>
<gene>
    <name evidence="1" type="primary">nudL</name>
    <name type="ordered locus">EC55989_1986</name>
</gene>
<keyword id="KW-0378">Hydrolase</keyword>
<keyword id="KW-0460">Magnesium</keyword>
<keyword id="KW-0464">Manganese</keyword>
<keyword id="KW-0479">Metal-binding</keyword>
<keyword id="KW-1185">Reference proteome</keyword>
<sequence>MEYRSLTLDDFLSRFQLLRPQINRETLNHRQAAVLIPIVRRPQPGLLLTQRSIHLRKHAGQVAFPGGAVDDTDASVIAAALREAEEEVAIPPSAVEVIGVLPPVDSVTGYQVTPVVGIIPPDLPYRASEDEVSAVFEMPLAQALHLGRYHPLDIYRRGDSHRVWLSWYEQYFVWGMTAGIIRELALQIGVKP</sequence>
<feature type="chain" id="PRO_1000185703" description="Uncharacterized Nudix hydrolase NudL">
    <location>
        <begin position="1"/>
        <end position="192"/>
    </location>
</feature>
<feature type="domain" description="Nudix hydrolase" evidence="1">
    <location>
        <begin position="29"/>
        <end position="160"/>
    </location>
</feature>
<feature type="short sequence motif" description="Nudix box">
    <location>
        <begin position="67"/>
        <end position="89"/>
    </location>
</feature>
<feature type="binding site" evidence="1">
    <location>
        <position position="83"/>
    </location>
    <ligand>
        <name>Mg(2+)</name>
        <dbReference type="ChEBI" id="CHEBI:18420"/>
    </ligand>
</feature>
<feature type="binding site" evidence="1">
    <location>
        <position position="87"/>
    </location>
    <ligand>
        <name>Mg(2+)</name>
        <dbReference type="ChEBI" id="CHEBI:18420"/>
    </ligand>
</feature>
<organism>
    <name type="scientific">Escherichia coli (strain 55989 / EAEC)</name>
    <dbReference type="NCBI Taxonomy" id="585055"/>
    <lineage>
        <taxon>Bacteria</taxon>
        <taxon>Pseudomonadati</taxon>
        <taxon>Pseudomonadota</taxon>
        <taxon>Gammaproteobacteria</taxon>
        <taxon>Enterobacterales</taxon>
        <taxon>Enterobacteriaceae</taxon>
        <taxon>Escherichia</taxon>
    </lineage>
</organism>
<accession>B7L6U1</accession>
<evidence type="ECO:0000255" key="1">
    <source>
        <dbReference type="HAMAP-Rule" id="MF_01592"/>
    </source>
</evidence>
<reference key="1">
    <citation type="journal article" date="2009" name="PLoS Genet.">
        <title>Organised genome dynamics in the Escherichia coli species results in highly diverse adaptive paths.</title>
        <authorList>
            <person name="Touchon M."/>
            <person name="Hoede C."/>
            <person name="Tenaillon O."/>
            <person name="Barbe V."/>
            <person name="Baeriswyl S."/>
            <person name="Bidet P."/>
            <person name="Bingen E."/>
            <person name="Bonacorsi S."/>
            <person name="Bouchier C."/>
            <person name="Bouvet O."/>
            <person name="Calteau A."/>
            <person name="Chiapello H."/>
            <person name="Clermont O."/>
            <person name="Cruveiller S."/>
            <person name="Danchin A."/>
            <person name="Diard M."/>
            <person name="Dossat C."/>
            <person name="Karoui M.E."/>
            <person name="Frapy E."/>
            <person name="Garry L."/>
            <person name="Ghigo J.M."/>
            <person name="Gilles A.M."/>
            <person name="Johnson J."/>
            <person name="Le Bouguenec C."/>
            <person name="Lescat M."/>
            <person name="Mangenot S."/>
            <person name="Martinez-Jehanne V."/>
            <person name="Matic I."/>
            <person name="Nassif X."/>
            <person name="Oztas S."/>
            <person name="Petit M.A."/>
            <person name="Pichon C."/>
            <person name="Rouy Z."/>
            <person name="Ruf C.S."/>
            <person name="Schneider D."/>
            <person name="Tourret J."/>
            <person name="Vacherie B."/>
            <person name="Vallenet D."/>
            <person name="Medigue C."/>
            <person name="Rocha E.P.C."/>
            <person name="Denamur E."/>
        </authorList>
    </citation>
    <scope>NUCLEOTIDE SEQUENCE [LARGE SCALE GENOMIC DNA]</scope>
    <source>
        <strain>55989 / EAEC</strain>
    </source>
</reference>